<feature type="chain" id="PRO_0000353324" description="DNA-directed RNA polymerase subunit beta'">
    <location>
        <begin position="1"/>
        <end position="1498"/>
    </location>
</feature>
<feature type="binding site" evidence="1">
    <location>
        <position position="67"/>
    </location>
    <ligand>
        <name>Zn(2+)</name>
        <dbReference type="ChEBI" id="CHEBI:29105"/>
        <label>1</label>
    </ligand>
</feature>
<feature type="binding site" evidence="1">
    <location>
        <position position="69"/>
    </location>
    <ligand>
        <name>Zn(2+)</name>
        <dbReference type="ChEBI" id="CHEBI:29105"/>
        <label>1</label>
    </ligand>
</feature>
<feature type="binding site" evidence="1">
    <location>
        <position position="82"/>
    </location>
    <ligand>
        <name>Zn(2+)</name>
        <dbReference type="ChEBI" id="CHEBI:29105"/>
        <label>1</label>
    </ligand>
</feature>
<feature type="binding site" evidence="1">
    <location>
        <position position="85"/>
    </location>
    <ligand>
        <name>Zn(2+)</name>
        <dbReference type="ChEBI" id="CHEBI:29105"/>
        <label>1</label>
    </ligand>
</feature>
<feature type="binding site" evidence="1">
    <location>
        <position position="499"/>
    </location>
    <ligand>
        <name>Mg(2+)</name>
        <dbReference type="ChEBI" id="CHEBI:18420"/>
    </ligand>
</feature>
<feature type="binding site" evidence="1">
    <location>
        <position position="501"/>
    </location>
    <ligand>
        <name>Mg(2+)</name>
        <dbReference type="ChEBI" id="CHEBI:18420"/>
    </ligand>
</feature>
<feature type="binding site" evidence="1">
    <location>
        <position position="503"/>
    </location>
    <ligand>
        <name>Mg(2+)</name>
        <dbReference type="ChEBI" id="CHEBI:18420"/>
    </ligand>
</feature>
<feature type="binding site" evidence="1">
    <location>
        <position position="867"/>
    </location>
    <ligand>
        <name>Zn(2+)</name>
        <dbReference type="ChEBI" id="CHEBI:29105"/>
        <label>2</label>
    </ligand>
</feature>
<feature type="binding site" evidence="1">
    <location>
        <position position="943"/>
    </location>
    <ligand>
        <name>Zn(2+)</name>
        <dbReference type="ChEBI" id="CHEBI:29105"/>
        <label>2</label>
    </ligand>
</feature>
<feature type="binding site" evidence="1">
    <location>
        <position position="950"/>
    </location>
    <ligand>
        <name>Zn(2+)</name>
        <dbReference type="ChEBI" id="CHEBI:29105"/>
        <label>2</label>
    </ligand>
</feature>
<feature type="binding site" evidence="1">
    <location>
        <position position="953"/>
    </location>
    <ligand>
        <name>Zn(2+)</name>
        <dbReference type="ChEBI" id="CHEBI:29105"/>
        <label>2</label>
    </ligand>
</feature>
<dbReference type="EC" id="2.7.7.6" evidence="1"/>
<dbReference type="EMBL" id="CP001101">
    <property type="protein sequence ID" value="ACE03289.1"/>
    <property type="molecule type" value="Genomic_DNA"/>
</dbReference>
<dbReference type="SMR" id="B3EL62"/>
<dbReference type="STRING" id="331678.Cphamn1_0320"/>
<dbReference type="KEGG" id="cpb:Cphamn1_0320"/>
<dbReference type="eggNOG" id="COG0086">
    <property type="taxonomic scope" value="Bacteria"/>
</dbReference>
<dbReference type="HOGENOM" id="CLU_000524_3_1_10"/>
<dbReference type="OrthoDB" id="9815296at2"/>
<dbReference type="GO" id="GO:0000428">
    <property type="term" value="C:DNA-directed RNA polymerase complex"/>
    <property type="evidence" value="ECO:0007669"/>
    <property type="project" value="UniProtKB-KW"/>
</dbReference>
<dbReference type="GO" id="GO:0003677">
    <property type="term" value="F:DNA binding"/>
    <property type="evidence" value="ECO:0007669"/>
    <property type="project" value="UniProtKB-UniRule"/>
</dbReference>
<dbReference type="GO" id="GO:0003899">
    <property type="term" value="F:DNA-directed RNA polymerase activity"/>
    <property type="evidence" value="ECO:0007669"/>
    <property type="project" value="UniProtKB-UniRule"/>
</dbReference>
<dbReference type="GO" id="GO:0000287">
    <property type="term" value="F:magnesium ion binding"/>
    <property type="evidence" value="ECO:0007669"/>
    <property type="project" value="UniProtKB-UniRule"/>
</dbReference>
<dbReference type="GO" id="GO:0008270">
    <property type="term" value="F:zinc ion binding"/>
    <property type="evidence" value="ECO:0007669"/>
    <property type="project" value="UniProtKB-UniRule"/>
</dbReference>
<dbReference type="GO" id="GO:0006351">
    <property type="term" value="P:DNA-templated transcription"/>
    <property type="evidence" value="ECO:0007669"/>
    <property type="project" value="UniProtKB-UniRule"/>
</dbReference>
<dbReference type="CDD" id="cd02655">
    <property type="entry name" value="RNAP_beta'_C"/>
    <property type="match status" value="1"/>
</dbReference>
<dbReference type="CDD" id="cd01609">
    <property type="entry name" value="RNAP_beta'_N"/>
    <property type="match status" value="1"/>
</dbReference>
<dbReference type="Gene3D" id="1.10.132.30">
    <property type="match status" value="1"/>
</dbReference>
<dbReference type="Gene3D" id="1.10.150.390">
    <property type="match status" value="1"/>
</dbReference>
<dbReference type="Gene3D" id="1.10.1790.20">
    <property type="match status" value="1"/>
</dbReference>
<dbReference type="Gene3D" id="1.10.40.90">
    <property type="match status" value="1"/>
</dbReference>
<dbReference type="Gene3D" id="2.40.40.20">
    <property type="match status" value="1"/>
</dbReference>
<dbReference type="Gene3D" id="2.40.50.100">
    <property type="match status" value="3"/>
</dbReference>
<dbReference type="Gene3D" id="4.10.860.120">
    <property type="entry name" value="RNA polymerase II, clamp domain"/>
    <property type="match status" value="1"/>
</dbReference>
<dbReference type="Gene3D" id="1.10.274.100">
    <property type="entry name" value="RNA polymerase Rpb1, domain 3"/>
    <property type="match status" value="1"/>
</dbReference>
<dbReference type="HAMAP" id="MF_01322">
    <property type="entry name" value="RNApol_bact_RpoC"/>
    <property type="match status" value="1"/>
</dbReference>
<dbReference type="InterPro" id="IPR045867">
    <property type="entry name" value="DNA-dir_RpoC_beta_prime"/>
</dbReference>
<dbReference type="InterPro" id="IPR012754">
    <property type="entry name" value="DNA-dir_RpoC_beta_prime_bact"/>
</dbReference>
<dbReference type="InterPro" id="IPR000722">
    <property type="entry name" value="RNA_pol_asu"/>
</dbReference>
<dbReference type="InterPro" id="IPR006592">
    <property type="entry name" value="RNA_pol_N"/>
</dbReference>
<dbReference type="InterPro" id="IPR007080">
    <property type="entry name" value="RNA_pol_Rpb1_1"/>
</dbReference>
<dbReference type="InterPro" id="IPR007066">
    <property type="entry name" value="RNA_pol_Rpb1_3"/>
</dbReference>
<dbReference type="InterPro" id="IPR042102">
    <property type="entry name" value="RNA_pol_Rpb1_3_sf"/>
</dbReference>
<dbReference type="InterPro" id="IPR007083">
    <property type="entry name" value="RNA_pol_Rpb1_4"/>
</dbReference>
<dbReference type="InterPro" id="IPR007081">
    <property type="entry name" value="RNA_pol_Rpb1_5"/>
</dbReference>
<dbReference type="InterPro" id="IPR044893">
    <property type="entry name" value="RNA_pol_Rpb1_clamp_domain"/>
</dbReference>
<dbReference type="InterPro" id="IPR038120">
    <property type="entry name" value="Rpb1_funnel_sf"/>
</dbReference>
<dbReference type="NCBIfam" id="TIGR02386">
    <property type="entry name" value="rpoC_TIGR"/>
    <property type="match status" value="1"/>
</dbReference>
<dbReference type="PANTHER" id="PTHR19376">
    <property type="entry name" value="DNA-DIRECTED RNA POLYMERASE"/>
    <property type="match status" value="1"/>
</dbReference>
<dbReference type="PANTHER" id="PTHR19376:SF54">
    <property type="entry name" value="DNA-DIRECTED RNA POLYMERASE SUBUNIT BETA"/>
    <property type="match status" value="1"/>
</dbReference>
<dbReference type="Pfam" id="PF04997">
    <property type="entry name" value="RNA_pol_Rpb1_1"/>
    <property type="match status" value="1"/>
</dbReference>
<dbReference type="Pfam" id="PF00623">
    <property type="entry name" value="RNA_pol_Rpb1_2"/>
    <property type="match status" value="2"/>
</dbReference>
<dbReference type="Pfam" id="PF04983">
    <property type="entry name" value="RNA_pol_Rpb1_3"/>
    <property type="match status" value="1"/>
</dbReference>
<dbReference type="Pfam" id="PF05000">
    <property type="entry name" value="RNA_pol_Rpb1_4"/>
    <property type="match status" value="1"/>
</dbReference>
<dbReference type="Pfam" id="PF04998">
    <property type="entry name" value="RNA_pol_Rpb1_5"/>
    <property type="match status" value="1"/>
</dbReference>
<dbReference type="SMART" id="SM00663">
    <property type="entry name" value="RPOLA_N"/>
    <property type="match status" value="1"/>
</dbReference>
<dbReference type="SUPFAM" id="SSF64484">
    <property type="entry name" value="beta and beta-prime subunits of DNA dependent RNA-polymerase"/>
    <property type="match status" value="1"/>
</dbReference>
<organism>
    <name type="scientific">Chlorobium phaeobacteroides (strain BS1)</name>
    <dbReference type="NCBI Taxonomy" id="331678"/>
    <lineage>
        <taxon>Bacteria</taxon>
        <taxon>Pseudomonadati</taxon>
        <taxon>Chlorobiota</taxon>
        <taxon>Chlorobiia</taxon>
        <taxon>Chlorobiales</taxon>
        <taxon>Chlorobiaceae</taxon>
        <taxon>Chlorobium/Pelodictyon group</taxon>
        <taxon>Chlorobium</taxon>
    </lineage>
</organism>
<comment type="function">
    <text evidence="1">DNA-dependent RNA polymerase catalyzes the transcription of DNA into RNA using the four ribonucleoside triphosphates as substrates.</text>
</comment>
<comment type="catalytic activity">
    <reaction evidence="1">
        <text>RNA(n) + a ribonucleoside 5'-triphosphate = RNA(n+1) + diphosphate</text>
        <dbReference type="Rhea" id="RHEA:21248"/>
        <dbReference type="Rhea" id="RHEA-COMP:14527"/>
        <dbReference type="Rhea" id="RHEA-COMP:17342"/>
        <dbReference type="ChEBI" id="CHEBI:33019"/>
        <dbReference type="ChEBI" id="CHEBI:61557"/>
        <dbReference type="ChEBI" id="CHEBI:140395"/>
        <dbReference type="EC" id="2.7.7.6"/>
    </reaction>
</comment>
<comment type="cofactor">
    <cofactor evidence="1">
        <name>Mg(2+)</name>
        <dbReference type="ChEBI" id="CHEBI:18420"/>
    </cofactor>
    <text evidence="1">Binds 1 Mg(2+) ion per subunit.</text>
</comment>
<comment type="cofactor">
    <cofactor evidence="1">
        <name>Zn(2+)</name>
        <dbReference type="ChEBI" id="CHEBI:29105"/>
    </cofactor>
    <text evidence="1">Binds 2 Zn(2+) ions per subunit.</text>
</comment>
<comment type="subunit">
    <text evidence="1">The RNAP catalytic core consists of 2 alpha, 1 beta, 1 beta' and 1 omega subunit. When a sigma factor is associated with the core the holoenzyme is formed, which can initiate transcription.</text>
</comment>
<comment type="similarity">
    <text evidence="1">Belongs to the RNA polymerase beta' chain family.</text>
</comment>
<proteinExistence type="inferred from homology"/>
<evidence type="ECO:0000255" key="1">
    <source>
        <dbReference type="HAMAP-Rule" id="MF_01322"/>
    </source>
</evidence>
<accession>B3EL62</accession>
<reference key="1">
    <citation type="submission" date="2008-06" db="EMBL/GenBank/DDBJ databases">
        <title>Complete sequence of Chlorobium phaeobacteroides BS1.</title>
        <authorList>
            <consortium name="US DOE Joint Genome Institute"/>
            <person name="Lucas S."/>
            <person name="Copeland A."/>
            <person name="Lapidus A."/>
            <person name="Glavina del Rio T."/>
            <person name="Dalin E."/>
            <person name="Tice H."/>
            <person name="Bruce D."/>
            <person name="Goodwin L."/>
            <person name="Pitluck S."/>
            <person name="Schmutz J."/>
            <person name="Larimer F."/>
            <person name="Land M."/>
            <person name="Hauser L."/>
            <person name="Kyrpides N."/>
            <person name="Ovchinnikova G."/>
            <person name="Li T."/>
            <person name="Liu Z."/>
            <person name="Zhao F."/>
            <person name="Overmann J."/>
            <person name="Bryant D.A."/>
            <person name="Richardson P."/>
        </authorList>
    </citation>
    <scope>NUCLEOTIDE SEQUENCE [LARGE SCALE GENOMIC DNA]</scope>
    <source>
        <strain>BS1</strain>
    </source>
</reference>
<sequence>MIFSQGVSPFKGDFSKIKFSIASPESILAHSRGEVLKPETINYRTFKPERDGLMCEKIFGPTKDWECYCGKYKRVRYKGIICDRCGVEVTMKSVRRERMGHISLAVPVVHTWFFRSVPSKIGALLDLSTKELERVIYYEVYVVINPGEPGEKQGIKKLDRLTEEQYFQIITEYEDNQDLDDNDPAKFVAKMGGEAIHTLLKGLELDTQAVDLRKILRESGSEQKRADALKRLKVVEAFRKSFEPVKKTRKKSTGLFPEDEAPEPYVYEGNKPEYMVMEVIPVIPPELRPLVPLEGGRFATSDLNDLYRRVIIRNNRLKKLIDIRAPEVILRNEKRMLQEAVDALFDNSRKANAVKTGESNRPLKSLSDALKGKQGRFRQNLLGKRVDYSGRSVIVVGPELKLHECGLPKSMAIELFQPFVIRRLVERGIAKSVKSAKKLIDKKDPIVWDVLEKVIDGRPVLLNRAPTLHRLGIQAFQPVLIEGKAIQIHPLVCTAFNADFDGDQMAVHVPLSQEAQLEATLLMLSSHNLILPQSGKPVTVPSQDMVLGMYYLTKSRLGEKGQGKLFYGTEEVMIAFNEERIGLHALVFVHYDGRIEQKFDPLRMLDIIPDDQPEQKEWLKTKIGENKILVTTVGRVLFNRYVPEKIGFINKVIDKKGAKDLISKLSSEVGNVATAEFLDNIKQVGFHFAMKGGLSIGLADAIIPEVKVQHIKKATKESTKIVREYNRGTLTENERYNQIVDVWQKVTNLVAEESYQKLRKDRSGFNPLFMMLDSGARGSREQVRQLTGMRGLIARPQKSMSGQPGEIIENPIISNLKEGLTVLEYFVSTHGARKGLSDTSLKTADAGYLTRRLHDVAQDVIVTEDDCGTTRGIHVERGIEEETGGQIKFSEKIRGRVASRDIVDNLNDVVILPAGGIITDEIADAIQKNAGVVEADIRSVLTCEAKQGICSKCYGTNLSVHKLVEIGEAVGVIAAQSIGEPGTQLTLRTFHQGGTAQGGIAETETKSSMDGQVEFESIRSVEQETINEDGMPETVTLVIQKNGKINILDPDSGKFLKRYEVPHGAHLVCKNGDIVKKDDVLFSSEPNSTQIIAEVEGEVKFVDIDKGVTYKEEVDPQTGYVQHVIINWRTKLRASETREPRILIVDKEGETLKTYPVPIKSNLFIENGKKVKIGDMLAKVPRNLDRVGGDITAGLPKVTELFEARIPSDPAIVSEIDGYVGFGPQRRSSKEIKVKNEFGEEKNYYVQVGKHVLANEGDEVTAGEPLTDGAVSPQDILRIQGPNAVQQYLVNEIQKVYQINAGVEINDKHLEVIVRQMLQKVRVEEPGDTELLPGDLIDRTMFIRANSDVSEKVRVTSKGDAPARIHEGQLYKTREIIKLNRELRRNSKQLIDVEPALQATSHPVLLGITSAALQTESVISAASFQETTKVLTDAAVAGKIDNLAGLKENVIVGKLIPAGTGLKKYLKLSLDMLAEGKESADALAEEEAGAAESGEDDA</sequence>
<protein>
    <recommendedName>
        <fullName evidence="1">DNA-directed RNA polymerase subunit beta'</fullName>
        <shortName evidence="1">RNAP subunit beta'</shortName>
        <ecNumber evidence="1">2.7.7.6</ecNumber>
    </recommendedName>
    <alternativeName>
        <fullName evidence="1">RNA polymerase subunit beta'</fullName>
    </alternativeName>
    <alternativeName>
        <fullName evidence="1">Transcriptase subunit beta'</fullName>
    </alternativeName>
</protein>
<gene>
    <name evidence="1" type="primary">rpoC</name>
    <name type="ordered locus">Cphamn1_0320</name>
</gene>
<keyword id="KW-0240">DNA-directed RNA polymerase</keyword>
<keyword id="KW-0460">Magnesium</keyword>
<keyword id="KW-0479">Metal-binding</keyword>
<keyword id="KW-0548">Nucleotidyltransferase</keyword>
<keyword id="KW-0804">Transcription</keyword>
<keyword id="KW-0808">Transferase</keyword>
<keyword id="KW-0862">Zinc</keyword>
<name>RPOC_CHLPB</name>